<comment type="function">
    <text evidence="5 6">Probable transcription factor that functions redundantly with OBE3 in specification of the hypophysis and establishment of the embryonic root (PubMed:22378640). Involved in the activation of ARF5/MP-dependent gene expression during embryonic root meristem initiation (PubMed:22378640). Involved in shoot meristem homeostasis (PubMed:27196372).</text>
</comment>
<comment type="subunit">
    <text evidence="4 5">Self-interacts (PubMed:22378640). Interacts with OBE1 and OBE2 (PubMed:19392692, PubMed:22378640). Interacts with OBE3 (PubMed:22378640).</text>
</comment>
<comment type="subcellular location">
    <subcellularLocation>
        <location evidence="1">Nucleus</location>
    </subcellularLocation>
</comment>
<comment type="alternative products">
    <event type="alternative splicing"/>
    <isoform>
        <id>Q84TI3-1</id>
        <name>1</name>
        <sequence type="displayed"/>
    </isoform>
    <isoform>
        <id>Q84TI3-2</id>
        <name>2</name>
        <sequence type="described" ref="VSP_041312 VSP_041313"/>
    </isoform>
</comment>
<comment type="developmental stage">
    <text evidence="5">Expressed in the two-cell stage embryo (PubMed:22378640). At early globular embryo stage, expressed both in the basal region of embryo proper and suspensor cells (PubMed:22378640). At heart and torpedo embryo stages expressed in the basal region apical regions of the embryo proper (PubMed:22378640).</text>
</comment>
<comment type="disruption phenotype">
    <text evidence="5 6">No visible phenotype under normal growth conditions, but the double mutants tta1 and tta2 exhibit a rootless phenotype and seedling lethality (PubMed:22378640). No visible phenotype under normal growth conditions, but the double mutants obe3-2 and obe4-2 exhibit broad growth defects and developmental arrest of seedlings (PubMed:27196372).</text>
</comment>
<comment type="sequence caution" evidence="10">
    <conflict type="erroneous gene model prediction">
        <sequence resource="EMBL-CDS" id="CAB87803"/>
    </conflict>
</comment>
<name>OBE4_ARATH</name>
<sequence length="1162" mass="130732">MKRLRSSDDLDFCNDKNVDGEPPNSDRPASSSHRGFFSGNNRDRGEDAAGFSRAFSRRRSNRDLDNHRPDARYHRSESACFSRRAFPKGFRSERERPNRDASVSSWRRFGGPGNDFGVDDRDRRLRDAERDRSLKSPSWSRDSPNELSKFKPLDSRNSRSRSKSLASPTWSKDSGSEQSKSVGNVVKKSEEEVQGKSSTTSSEMEEGELEPEPQPETASGLAHQTKHDCKLPSCSADDHKNARIDRSFQEIGKSAQLDANTESNRELSHVGGNREMETTDSMTDKKSVEDAENVPEHATESMHVSQNNVNDTSTALAIEHDHRDGTITASANKITDTVDEKGDKDEDYKENLHGVKLEETLYPDVPERLEELKEVKGNDGDANKAEVEGPECVEENALANRTPAEYISSVSDSSVHKCKDKGKNSDVPLTHLVGNALFSESKTEDLHDKDKDEKDDNFGGPSIRGFELFSSSPVRRAKKTEQSGVNKHKDEKLLLEPLDLSLSLPDVLLPIGGQDTNQLGSPVRSGSVRSLTDTFCTNSDGFTMSMSFSGSRSFNHNPSCSLSHNIGDNEQSVHSRPIFQGIDWQALSHNDSKYNENTVYQRLMENGNGSVQPRAMKGNLISGQADEEHLRLPDGSSKAANILEKQLSFQKSVDVRSACPRTGSLENGSKFTVEKKTAKDFYSGSNSWITGLEAGGHDFVETVIRYILSDSMPVMTKRFHEMPTRNITSLKENIRQMMLNMDKNVQLGAFQDALQNRTDITLELLTKSHRAQLEILVALKSGRSDFLLLDNSISSSHLAEIFMNMRCKNLSCRVLLPVDECDCRVCSRKDGFCSACMCLVCSNFDMASNTCSWVGCDVCLHWCHTDCGIKESYIRNGINASGAPGMTEMQFHCVACNHPSEMFGFVKEVFLNFAREWKFERFCKELEYVNKIFSSSKDSRGKQLRQAADAMLASLKSKLIGLPEACNRILGFISDCDSSTPAETSAPFIYEQPKPRHERGSPSQDTAWLRSVCSDNPHNQLKRSASVADAFHRERQVEICAVEMELERGSPKEPRFEELESIVRMKQAEAEMFQGRADDARREAEGLKRIAIAKKEKIEEEYNRRMGKLSMEDAQERRRRRYEELEAMQRGQREFYEMKMRMEEEMRGLLTKMEMTKQSLAL</sequence>
<keyword id="KW-0025">Alternative splicing</keyword>
<keyword id="KW-0175">Coiled coil</keyword>
<keyword id="KW-0479">Metal-binding</keyword>
<keyword id="KW-0539">Nucleus</keyword>
<keyword id="KW-1185">Reference proteome</keyword>
<keyword id="KW-0804">Transcription</keyword>
<keyword id="KW-0805">Transcription regulation</keyword>
<keyword id="KW-0862">Zinc</keyword>
<keyword id="KW-0863">Zinc-finger</keyword>
<dbReference type="EMBL" id="AL163818">
    <property type="protein sequence ID" value="CAB87803.1"/>
    <property type="status" value="ALT_SEQ"/>
    <property type="molecule type" value="Genomic_DNA"/>
</dbReference>
<dbReference type="EMBL" id="CP002686">
    <property type="protein sequence ID" value="AEE80495.1"/>
    <property type="molecule type" value="Genomic_DNA"/>
</dbReference>
<dbReference type="EMBL" id="CP002686">
    <property type="protein sequence ID" value="ANM64027.1"/>
    <property type="molecule type" value="Genomic_DNA"/>
</dbReference>
<dbReference type="EMBL" id="BT005768">
    <property type="protein sequence ID" value="AAO64172.1"/>
    <property type="molecule type" value="mRNA"/>
</dbReference>
<dbReference type="EMBL" id="AK228553">
    <property type="protein sequence ID" value="BAF00474.1"/>
    <property type="molecule type" value="mRNA"/>
</dbReference>
<dbReference type="PIR" id="T49191">
    <property type="entry name" value="T49191"/>
</dbReference>
<dbReference type="RefSeq" id="NP_001326078.1">
    <molecule id="Q84TI3-1"/>
    <property type="nucleotide sequence ID" value="NM_001340219.1"/>
</dbReference>
<dbReference type="RefSeq" id="NP_191909.1">
    <molecule id="Q84TI3-1"/>
    <property type="nucleotide sequence ID" value="NM_116215.4"/>
</dbReference>
<dbReference type="SMR" id="Q84TI3"/>
<dbReference type="BioGRID" id="10839">
    <property type="interactions" value="6"/>
</dbReference>
<dbReference type="FunCoup" id="Q84TI3">
    <property type="interactions" value="1607"/>
</dbReference>
<dbReference type="STRING" id="3702.Q84TI3"/>
<dbReference type="GlyGen" id="Q84TI3">
    <property type="glycosylation" value="1 site"/>
</dbReference>
<dbReference type="iPTMnet" id="Q84TI3"/>
<dbReference type="PaxDb" id="3702-AT3G63500.2"/>
<dbReference type="ProteomicsDB" id="250854">
    <molecule id="Q84TI3-1"/>
</dbReference>
<dbReference type="EnsemblPlants" id="AT3G63500.2">
    <molecule id="Q84TI3-1"/>
    <property type="protein sequence ID" value="AT3G63500.2"/>
    <property type="gene ID" value="AT3G63500"/>
</dbReference>
<dbReference type="EnsemblPlants" id="AT3G63500.3">
    <molecule id="Q84TI3-1"/>
    <property type="protein sequence ID" value="AT3G63500.3"/>
    <property type="gene ID" value="AT3G63500"/>
</dbReference>
<dbReference type="Gramene" id="AT3G63500.2">
    <molecule id="Q84TI3-1"/>
    <property type="protein sequence ID" value="AT3G63500.2"/>
    <property type="gene ID" value="AT3G63500"/>
</dbReference>
<dbReference type="Gramene" id="AT3G63500.3">
    <molecule id="Q84TI3-1"/>
    <property type="protein sequence ID" value="AT3G63500.3"/>
    <property type="gene ID" value="AT3G63500"/>
</dbReference>
<dbReference type="KEGG" id="ath:AT3G63500"/>
<dbReference type="Araport" id="AT3G63500"/>
<dbReference type="TAIR" id="AT3G63500">
    <property type="gene designation" value="TTA2"/>
</dbReference>
<dbReference type="eggNOG" id="ENOG502QPTA">
    <property type="taxonomic scope" value="Eukaryota"/>
</dbReference>
<dbReference type="HOGENOM" id="CLU_006737_1_0_1"/>
<dbReference type="InParanoid" id="Q84TI3"/>
<dbReference type="PRO" id="PR:Q84TI3"/>
<dbReference type="Proteomes" id="UP000006548">
    <property type="component" value="Chromosome 3"/>
</dbReference>
<dbReference type="ExpressionAtlas" id="Q84TI3">
    <property type="expression patterns" value="baseline and differential"/>
</dbReference>
<dbReference type="GO" id="GO:0005634">
    <property type="term" value="C:nucleus"/>
    <property type="evidence" value="ECO:0007669"/>
    <property type="project" value="UniProtKB-SubCell"/>
</dbReference>
<dbReference type="GO" id="GO:0008270">
    <property type="term" value="F:zinc ion binding"/>
    <property type="evidence" value="ECO:0007669"/>
    <property type="project" value="UniProtKB-KW"/>
</dbReference>
<dbReference type="GO" id="GO:0001708">
    <property type="term" value="P:cell fate specification"/>
    <property type="evidence" value="ECO:0000316"/>
    <property type="project" value="TAIR"/>
</dbReference>
<dbReference type="GO" id="GO:0090421">
    <property type="term" value="P:embryonic meristem initiation"/>
    <property type="evidence" value="ECO:0000316"/>
    <property type="project" value="TAIR"/>
</dbReference>
<dbReference type="GO" id="GO:0009880">
    <property type="term" value="P:embryonic pattern specification"/>
    <property type="evidence" value="ECO:0000316"/>
    <property type="project" value="TAIR"/>
</dbReference>
<dbReference type="CDD" id="cd15612">
    <property type="entry name" value="PHD_OBE1_like"/>
    <property type="match status" value="1"/>
</dbReference>
<dbReference type="InterPro" id="IPR047578">
    <property type="entry name" value="OBE1-like_PHD"/>
</dbReference>
<dbReference type="InterPro" id="IPR004082">
    <property type="entry name" value="OBERON"/>
</dbReference>
<dbReference type="InterPro" id="IPR032881">
    <property type="entry name" value="Oberon-like_PHD"/>
</dbReference>
<dbReference type="InterPro" id="IPR032535">
    <property type="entry name" value="Oberon_cc"/>
</dbReference>
<dbReference type="PANTHER" id="PTHR21736:SF20">
    <property type="entry name" value="PROTEIN OBERON 4"/>
    <property type="match status" value="1"/>
</dbReference>
<dbReference type="PANTHER" id="PTHR21736">
    <property type="entry name" value="VERNALIZATION-INSENSITIVE PROTEIN 3"/>
    <property type="match status" value="1"/>
</dbReference>
<dbReference type="Pfam" id="PF16312">
    <property type="entry name" value="Oberon_cc"/>
    <property type="match status" value="1"/>
</dbReference>
<dbReference type="Pfam" id="PF07227">
    <property type="entry name" value="PHD_Oberon"/>
    <property type="match status" value="1"/>
</dbReference>
<dbReference type="PRINTS" id="PR01544">
    <property type="entry name" value="ARATH130DUF"/>
</dbReference>
<protein>
    <recommendedName>
        <fullName evidence="10">Protein OBERON 4</fullName>
    </recommendedName>
    <alternativeName>
        <fullName evidence="8">Protein TITANIA 1</fullName>
    </alternativeName>
</protein>
<organism>
    <name type="scientific">Arabidopsis thaliana</name>
    <name type="common">Mouse-ear cress</name>
    <dbReference type="NCBI Taxonomy" id="3702"/>
    <lineage>
        <taxon>Eukaryota</taxon>
        <taxon>Viridiplantae</taxon>
        <taxon>Streptophyta</taxon>
        <taxon>Embryophyta</taxon>
        <taxon>Tracheophyta</taxon>
        <taxon>Spermatophyta</taxon>
        <taxon>Magnoliopsida</taxon>
        <taxon>eudicotyledons</taxon>
        <taxon>Gunneridae</taxon>
        <taxon>Pentapetalae</taxon>
        <taxon>rosids</taxon>
        <taxon>malvids</taxon>
        <taxon>Brassicales</taxon>
        <taxon>Brassicaceae</taxon>
        <taxon>Camelineae</taxon>
        <taxon>Arabidopsis</taxon>
    </lineage>
</organism>
<proteinExistence type="evidence at protein level"/>
<feature type="chain" id="PRO_0000399749" description="Protein OBERON 4">
    <location>
        <begin position="1"/>
        <end position="1162"/>
    </location>
</feature>
<feature type="zinc finger region" description="PHD-type">
    <location>
        <begin position="835"/>
        <end position="899"/>
    </location>
</feature>
<feature type="region of interest" description="Disordered" evidence="3">
    <location>
        <begin position="1"/>
        <end position="235"/>
    </location>
</feature>
<feature type="region of interest" description="Disordered" evidence="3">
    <location>
        <begin position="251"/>
        <end position="307"/>
    </location>
</feature>
<feature type="region of interest" description="Disordered" evidence="3">
    <location>
        <begin position="321"/>
        <end position="346"/>
    </location>
</feature>
<feature type="region of interest" description="Disordered" evidence="3">
    <location>
        <begin position="441"/>
        <end position="485"/>
    </location>
</feature>
<feature type="coiled-coil region" evidence="2">
    <location>
        <begin position="1065"/>
        <end position="1161"/>
    </location>
</feature>
<feature type="compositionally biased region" description="Basic and acidic residues" evidence="3">
    <location>
        <begin position="1"/>
        <end position="19"/>
    </location>
</feature>
<feature type="compositionally biased region" description="Basic and acidic residues" evidence="3">
    <location>
        <begin position="61"/>
        <end position="77"/>
    </location>
</feature>
<feature type="compositionally biased region" description="Basic and acidic residues" evidence="3">
    <location>
        <begin position="90"/>
        <end position="99"/>
    </location>
</feature>
<feature type="compositionally biased region" description="Basic and acidic residues" evidence="3">
    <location>
        <begin position="118"/>
        <end position="134"/>
    </location>
</feature>
<feature type="compositionally biased region" description="Polar residues" evidence="3">
    <location>
        <begin position="135"/>
        <end position="146"/>
    </location>
</feature>
<feature type="compositionally biased region" description="Basic and acidic residues" evidence="3">
    <location>
        <begin position="148"/>
        <end position="157"/>
    </location>
</feature>
<feature type="compositionally biased region" description="Polar residues" evidence="3">
    <location>
        <begin position="163"/>
        <end position="182"/>
    </location>
</feature>
<feature type="compositionally biased region" description="Acidic residues" evidence="3">
    <location>
        <begin position="203"/>
        <end position="213"/>
    </location>
</feature>
<feature type="compositionally biased region" description="Basic and acidic residues" evidence="3">
    <location>
        <begin position="225"/>
        <end position="235"/>
    </location>
</feature>
<feature type="compositionally biased region" description="Basic and acidic residues" evidence="3">
    <location>
        <begin position="263"/>
        <end position="300"/>
    </location>
</feature>
<feature type="compositionally biased region" description="Basic and acidic residues" evidence="3">
    <location>
        <begin position="336"/>
        <end position="346"/>
    </location>
</feature>
<feature type="compositionally biased region" description="Basic and acidic residues" evidence="3">
    <location>
        <begin position="441"/>
        <end position="457"/>
    </location>
</feature>
<feature type="splice variant" id="VSP_041312" description="In isoform 2." evidence="7 9">
    <location>
        <begin position="1"/>
        <end position="187"/>
    </location>
</feature>
<feature type="splice variant" id="VSP_041313" description="In isoform 2." evidence="7 9">
    <original>KSEEEVQGKSSTTSSEMEEGELEPEPQPETASGLAHQTKHDCKLPSCSADDHKNARIDRSFQEIGKSA</original>
    <variation>MIRMLTENLPTRTVRPLPPTGASSRATTVTAGKMLPASPGLFPVGDPIVTWIIIGQMPGTIDLRAPVS</variation>
    <location>
        <begin position="188"/>
        <end position="255"/>
    </location>
</feature>
<accession>Q84TI3</accession>
<accession>Q9LY65</accession>
<reference key="1">
    <citation type="journal article" date="2000" name="Nature">
        <title>Sequence and analysis of chromosome 3 of the plant Arabidopsis thaliana.</title>
        <authorList>
            <person name="Salanoubat M."/>
            <person name="Lemcke K."/>
            <person name="Rieger M."/>
            <person name="Ansorge W."/>
            <person name="Unseld M."/>
            <person name="Fartmann B."/>
            <person name="Valle G."/>
            <person name="Bloecker H."/>
            <person name="Perez-Alonso M."/>
            <person name="Obermaier B."/>
            <person name="Delseny M."/>
            <person name="Boutry M."/>
            <person name="Grivell L.A."/>
            <person name="Mache R."/>
            <person name="Puigdomenech P."/>
            <person name="De Simone V."/>
            <person name="Choisne N."/>
            <person name="Artiguenave F."/>
            <person name="Robert C."/>
            <person name="Brottier P."/>
            <person name="Wincker P."/>
            <person name="Cattolico L."/>
            <person name="Weissenbach J."/>
            <person name="Saurin W."/>
            <person name="Quetier F."/>
            <person name="Schaefer M."/>
            <person name="Mueller-Auer S."/>
            <person name="Gabel C."/>
            <person name="Fuchs M."/>
            <person name="Benes V."/>
            <person name="Wurmbach E."/>
            <person name="Drzonek H."/>
            <person name="Erfle H."/>
            <person name="Jordan N."/>
            <person name="Bangert S."/>
            <person name="Wiedelmann R."/>
            <person name="Kranz H."/>
            <person name="Voss H."/>
            <person name="Holland R."/>
            <person name="Brandt P."/>
            <person name="Nyakatura G."/>
            <person name="Vezzi A."/>
            <person name="D'Angelo M."/>
            <person name="Pallavicini A."/>
            <person name="Toppo S."/>
            <person name="Simionati B."/>
            <person name="Conrad A."/>
            <person name="Hornischer K."/>
            <person name="Kauer G."/>
            <person name="Loehnert T.-H."/>
            <person name="Nordsiek G."/>
            <person name="Reichelt J."/>
            <person name="Scharfe M."/>
            <person name="Schoen O."/>
            <person name="Bargues M."/>
            <person name="Terol J."/>
            <person name="Climent J."/>
            <person name="Navarro P."/>
            <person name="Collado C."/>
            <person name="Perez-Perez A."/>
            <person name="Ottenwaelder B."/>
            <person name="Duchemin D."/>
            <person name="Cooke R."/>
            <person name="Laudie M."/>
            <person name="Berger-Llauro C."/>
            <person name="Purnelle B."/>
            <person name="Masuy D."/>
            <person name="de Haan M."/>
            <person name="Maarse A.C."/>
            <person name="Alcaraz J.-P."/>
            <person name="Cottet A."/>
            <person name="Casacuberta E."/>
            <person name="Monfort A."/>
            <person name="Argiriou A."/>
            <person name="Flores M."/>
            <person name="Liguori R."/>
            <person name="Vitale D."/>
            <person name="Mannhaupt G."/>
            <person name="Haase D."/>
            <person name="Schoof H."/>
            <person name="Rudd S."/>
            <person name="Zaccaria P."/>
            <person name="Mewes H.-W."/>
            <person name="Mayer K.F.X."/>
            <person name="Kaul S."/>
            <person name="Town C.D."/>
            <person name="Koo H.L."/>
            <person name="Tallon L.J."/>
            <person name="Jenkins J."/>
            <person name="Rooney T."/>
            <person name="Rizzo M."/>
            <person name="Walts A."/>
            <person name="Utterback T."/>
            <person name="Fujii C.Y."/>
            <person name="Shea T.P."/>
            <person name="Creasy T.H."/>
            <person name="Haas B."/>
            <person name="Maiti R."/>
            <person name="Wu D."/>
            <person name="Peterson J."/>
            <person name="Van Aken S."/>
            <person name="Pai G."/>
            <person name="Militscher J."/>
            <person name="Sellers P."/>
            <person name="Gill J.E."/>
            <person name="Feldblyum T.V."/>
            <person name="Preuss D."/>
            <person name="Lin X."/>
            <person name="Nierman W.C."/>
            <person name="Salzberg S.L."/>
            <person name="White O."/>
            <person name="Venter J.C."/>
            <person name="Fraser C.M."/>
            <person name="Kaneko T."/>
            <person name="Nakamura Y."/>
            <person name="Sato S."/>
            <person name="Kato T."/>
            <person name="Asamizu E."/>
            <person name="Sasamoto S."/>
            <person name="Kimura T."/>
            <person name="Idesawa K."/>
            <person name="Kawashima K."/>
            <person name="Kishida Y."/>
            <person name="Kiyokawa C."/>
            <person name="Kohara M."/>
            <person name="Matsumoto M."/>
            <person name="Matsuno A."/>
            <person name="Muraki A."/>
            <person name="Nakayama S."/>
            <person name="Nakazaki N."/>
            <person name="Shinpo S."/>
            <person name="Takeuchi C."/>
            <person name="Wada T."/>
            <person name="Watanabe A."/>
            <person name="Yamada M."/>
            <person name="Yasuda M."/>
            <person name="Tabata S."/>
        </authorList>
    </citation>
    <scope>NUCLEOTIDE SEQUENCE [LARGE SCALE GENOMIC DNA]</scope>
    <source>
        <strain>cv. Columbia</strain>
    </source>
</reference>
<reference key="2">
    <citation type="journal article" date="2017" name="Plant J.">
        <title>Araport11: a complete reannotation of the Arabidopsis thaliana reference genome.</title>
        <authorList>
            <person name="Cheng C.Y."/>
            <person name="Krishnakumar V."/>
            <person name="Chan A.P."/>
            <person name="Thibaud-Nissen F."/>
            <person name="Schobel S."/>
            <person name="Town C.D."/>
        </authorList>
    </citation>
    <scope>GENOME REANNOTATION</scope>
    <source>
        <strain>cv. Columbia</strain>
    </source>
</reference>
<reference key="3">
    <citation type="journal article" date="2003" name="Science">
        <title>Empirical analysis of transcriptional activity in the Arabidopsis genome.</title>
        <authorList>
            <person name="Yamada K."/>
            <person name="Lim J."/>
            <person name="Dale J.M."/>
            <person name="Chen H."/>
            <person name="Shinn P."/>
            <person name="Palm C.J."/>
            <person name="Southwick A.M."/>
            <person name="Wu H.C."/>
            <person name="Kim C.J."/>
            <person name="Nguyen M."/>
            <person name="Pham P.K."/>
            <person name="Cheuk R.F."/>
            <person name="Karlin-Newmann G."/>
            <person name="Liu S.X."/>
            <person name="Lam B."/>
            <person name="Sakano H."/>
            <person name="Wu T."/>
            <person name="Yu G."/>
            <person name="Miranda M."/>
            <person name="Quach H.L."/>
            <person name="Tripp M."/>
            <person name="Chang C.H."/>
            <person name="Lee J.M."/>
            <person name="Toriumi M.J."/>
            <person name="Chan M.M."/>
            <person name="Tang C.C."/>
            <person name="Onodera C.S."/>
            <person name="Deng J.M."/>
            <person name="Akiyama K."/>
            <person name="Ansari Y."/>
            <person name="Arakawa T."/>
            <person name="Banh J."/>
            <person name="Banno F."/>
            <person name="Bowser L."/>
            <person name="Brooks S.Y."/>
            <person name="Carninci P."/>
            <person name="Chao Q."/>
            <person name="Choy N."/>
            <person name="Enju A."/>
            <person name="Goldsmith A.D."/>
            <person name="Gurjal M."/>
            <person name="Hansen N.F."/>
            <person name="Hayashizaki Y."/>
            <person name="Johnson-Hopson C."/>
            <person name="Hsuan V.W."/>
            <person name="Iida K."/>
            <person name="Karnes M."/>
            <person name="Khan S."/>
            <person name="Koesema E."/>
            <person name="Ishida J."/>
            <person name="Jiang P.X."/>
            <person name="Jones T."/>
            <person name="Kawai J."/>
            <person name="Kamiya A."/>
            <person name="Meyers C."/>
            <person name="Nakajima M."/>
            <person name="Narusaka M."/>
            <person name="Seki M."/>
            <person name="Sakurai T."/>
            <person name="Satou M."/>
            <person name="Tamse R."/>
            <person name="Vaysberg M."/>
            <person name="Wallender E.K."/>
            <person name="Wong C."/>
            <person name="Yamamura Y."/>
            <person name="Yuan S."/>
            <person name="Shinozaki K."/>
            <person name="Davis R.W."/>
            <person name="Theologis A."/>
            <person name="Ecker J.R."/>
        </authorList>
    </citation>
    <scope>NUCLEOTIDE SEQUENCE [LARGE SCALE MRNA] (ISOFORM 2)</scope>
    <source>
        <strain>cv. Columbia</strain>
    </source>
</reference>
<reference key="4">
    <citation type="submission" date="2006-07" db="EMBL/GenBank/DDBJ databases">
        <title>Large-scale analysis of RIKEN Arabidopsis full-length (RAFL) cDNAs.</title>
        <authorList>
            <person name="Totoki Y."/>
            <person name="Seki M."/>
            <person name="Ishida J."/>
            <person name="Nakajima M."/>
            <person name="Enju A."/>
            <person name="Kamiya A."/>
            <person name="Narusaka M."/>
            <person name="Shin-i T."/>
            <person name="Nakagawa M."/>
            <person name="Sakamoto N."/>
            <person name="Oishi K."/>
            <person name="Kohara Y."/>
            <person name="Kobayashi M."/>
            <person name="Toyoda A."/>
            <person name="Sakaki Y."/>
            <person name="Sakurai T."/>
            <person name="Iida K."/>
            <person name="Akiyama K."/>
            <person name="Satou M."/>
            <person name="Toyoda T."/>
            <person name="Konagaya A."/>
            <person name="Carninci P."/>
            <person name="Kawai J."/>
            <person name="Hayashizaki Y."/>
            <person name="Shinozaki K."/>
        </authorList>
    </citation>
    <scope>NUCLEOTIDE SEQUENCE [LARGE SCALE MRNA] (ISOFORM 2)</scope>
    <source>
        <strain>cv. Columbia</strain>
    </source>
</reference>
<reference key="5">
    <citation type="journal article" date="2009" name="Plant J.">
        <title>Arabidopsis plant homeodomain finger proteins operate downstream of auxin accumulation in specifying the vasculature and primary root meristem.</title>
        <authorList>
            <person name="Thomas C.L."/>
            <person name="Schmidt D."/>
            <person name="Bayer E.M."/>
            <person name="Dreos R."/>
            <person name="Maule A.J."/>
        </authorList>
    </citation>
    <scope>INTERACTION WITH OBE1 AND OBE2</scope>
</reference>
<reference key="6">
    <citation type="journal article" date="2012" name="Development">
        <title>Control of embryonic meristem initiation in Arabidopsis by PHD-finger protein complexes.</title>
        <authorList>
            <person name="Saiga S."/>
            <person name="Moeller B."/>
            <person name="Watanabe-Taneda A."/>
            <person name="Abe M."/>
            <person name="Weijers D."/>
            <person name="Komeda Y."/>
        </authorList>
    </citation>
    <scope>FUNCTION</scope>
    <scope>INTERACTION WITH OBE1; OBE2 AND OBE3</scope>
    <scope>DEVELOPMENTAL STAGE</scope>
    <scope>DISRUPTION PHENOTYPE</scope>
</reference>
<reference key="7">
    <citation type="journal article" date="2016" name="PLoS ONE">
        <title>OBE3 and WUS interaction in shoot meristem stem cell regulation.</title>
        <authorList>
            <person name="Lin T.F."/>
            <person name="Saiga S."/>
            <person name="Abe M."/>
            <person name="Laux T."/>
        </authorList>
    </citation>
    <scope>FUNCTION</scope>
    <scope>DISRUPTION PHENOTYPE</scope>
</reference>
<gene>
    <name evidence="10" type="primary">OBE4</name>
    <name evidence="11" type="ordered locus">At3g63500</name>
    <name evidence="12" type="ORF">MAA21.130</name>
</gene>
<evidence type="ECO:0000250" key="1">
    <source>
        <dbReference type="UniProtKB" id="Q9S736"/>
    </source>
</evidence>
<evidence type="ECO:0000255" key="2"/>
<evidence type="ECO:0000256" key="3">
    <source>
        <dbReference type="SAM" id="MobiDB-lite"/>
    </source>
</evidence>
<evidence type="ECO:0000269" key="4">
    <source>
    </source>
</evidence>
<evidence type="ECO:0000269" key="5">
    <source>
    </source>
</evidence>
<evidence type="ECO:0000269" key="6">
    <source>
    </source>
</evidence>
<evidence type="ECO:0000303" key="7">
    <source>
    </source>
</evidence>
<evidence type="ECO:0000303" key="8">
    <source>
    </source>
</evidence>
<evidence type="ECO:0000303" key="9">
    <source ref="4"/>
</evidence>
<evidence type="ECO:0000305" key="10"/>
<evidence type="ECO:0000312" key="11">
    <source>
        <dbReference type="Araport" id="AT3G63500"/>
    </source>
</evidence>
<evidence type="ECO:0000312" key="12">
    <source>
        <dbReference type="EMBL" id="CAB87803.1"/>
    </source>
</evidence>